<comment type="catalytic activity">
    <reaction>
        <text>Hydrolysis of (1-&gt;6)-alpha-D-glucosidic linkages in pullulan, amylopectin and glycogen, and in the alpha- and beta-limit dextrins of amylopectin and glycogen.</text>
        <dbReference type="EC" id="3.2.1.41"/>
    </reaction>
</comment>
<comment type="similarity">
    <text evidence="3">Belongs to the glycosyl hydrolase 13 family.</text>
</comment>
<reference key="1">
    <citation type="journal article" date="1998" name="FEMS Microbiol. Lett.">
        <title>Isolation and analysis of genes for amylolytic enzymes of the hyperthermophilic bacterium Thermotoga maritima.</title>
        <authorList>
            <person name="Bibel M."/>
            <person name="Brettl C."/>
            <person name="Gosslar U."/>
            <person name="Kriegshaeuser G."/>
            <person name="Liebl W."/>
        </authorList>
    </citation>
    <scope>NUCLEOTIDE SEQUENCE [GENOMIC DNA]</scope>
    <source>
        <strain>ATCC 43589 / DSM 3109 / JCM 10099 / NBRC 100826 / MSB8</strain>
    </source>
</reference>
<reference key="2">
    <citation type="journal article" date="1999" name="Nature">
        <title>Evidence for lateral gene transfer between Archaea and Bacteria from genome sequence of Thermotoga maritima.</title>
        <authorList>
            <person name="Nelson K.E."/>
            <person name="Clayton R.A."/>
            <person name="Gill S.R."/>
            <person name="Gwinn M.L."/>
            <person name="Dodson R.J."/>
            <person name="Haft D.H."/>
            <person name="Hickey E.K."/>
            <person name="Peterson J.D."/>
            <person name="Nelson W.C."/>
            <person name="Ketchum K.A."/>
            <person name="McDonald L.A."/>
            <person name="Utterback T.R."/>
            <person name="Malek J.A."/>
            <person name="Linher K.D."/>
            <person name="Garrett M.M."/>
            <person name="Stewart A.M."/>
            <person name="Cotton M.D."/>
            <person name="Pratt M.S."/>
            <person name="Phillips C.A."/>
            <person name="Richardson D.L."/>
            <person name="Heidelberg J.F."/>
            <person name="Sutton G.G."/>
            <person name="Fleischmann R.D."/>
            <person name="Eisen J.A."/>
            <person name="White O."/>
            <person name="Salzberg S.L."/>
            <person name="Smith H.O."/>
            <person name="Venter J.C."/>
            <person name="Fraser C.M."/>
        </authorList>
    </citation>
    <scope>NUCLEOTIDE SEQUENCE [LARGE SCALE GENOMIC DNA]</scope>
    <source>
        <strain>ATCC 43589 / DSM 3109 / JCM 10099 / NBRC 100826 / MSB8</strain>
    </source>
</reference>
<name>PULA_THEMA</name>
<proteinExistence type="evidence at protein level"/>
<dbReference type="EC" id="3.2.1.41"/>
<dbReference type="EMBL" id="AJ001087">
    <property type="protein sequence ID" value="CAA04522.1"/>
    <property type="molecule type" value="Genomic_DNA"/>
</dbReference>
<dbReference type="EMBL" id="AE000512">
    <property type="protein sequence ID" value="AAD36907.1"/>
    <property type="molecule type" value="Genomic_DNA"/>
</dbReference>
<dbReference type="PIR" id="H72204">
    <property type="entry name" value="H72204"/>
</dbReference>
<dbReference type="RefSeq" id="NP_229641.1">
    <property type="nucleotide sequence ID" value="NC_000853.1"/>
</dbReference>
<dbReference type="RefSeq" id="WP_004082389.1">
    <property type="nucleotide sequence ID" value="NZ_CP011107.1"/>
</dbReference>
<dbReference type="PDB" id="2J71">
    <property type="method" value="X-ray"/>
    <property type="resolution" value="1.69 A"/>
    <property type="chains" value="A=18-120"/>
</dbReference>
<dbReference type="PDB" id="2J72">
    <property type="method" value="X-ray"/>
    <property type="resolution" value="1.49 A"/>
    <property type="chains" value="A/B=18-120"/>
</dbReference>
<dbReference type="PDB" id="2J73">
    <property type="method" value="X-ray"/>
    <property type="resolution" value="1.40 A"/>
    <property type="chains" value="A/B=18-120"/>
</dbReference>
<dbReference type="PDBsum" id="2J71"/>
<dbReference type="PDBsum" id="2J72"/>
<dbReference type="PDBsum" id="2J73"/>
<dbReference type="SMR" id="O33840"/>
<dbReference type="FunCoup" id="O33840">
    <property type="interactions" value="114"/>
</dbReference>
<dbReference type="STRING" id="243274.TM_1845"/>
<dbReference type="CAZy" id="CBM41">
    <property type="family name" value="Carbohydrate-Binding Module Family 41"/>
</dbReference>
<dbReference type="CAZy" id="CBM48">
    <property type="family name" value="Carbohydrate-Binding Module Family 48"/>
</dbReference>
<dbReference type="CAZy" id="GH13">
    <property type="family name" value="Glycoside Hydrolase Family 13"/>
</dbReference>
<dbReference type="PaxDb" id="243274-THEMA_04980"/>
<dbReference type="EnsemblBacteria" id="AAD36907">
    <property type="protein sequence ID" value="AAD36907"/>
    <property type="gene ID" value="TM_1845"/>
</dbReference>
<dbReference type="KEGG" id="tma:TM1845"/>
<dbReference type="KEGG" id="tmi:THEMA_04980"/>
<dbReference type="KEGG" id="tmm:Tmari_1853"/>
<dbReference type="KEGG" id="tmw:THMA_1888"/>
<dbReference type="eggNOG" id="COG1523">
    <property type="taxonomic scope" value="Bacteria"/>
</dbReference>
<dbReference type="InParanoid" id="O33840"/>
<dbReference type="OrthoDB" id="9761875at2"/>
<dbReference type="EvolutionaryTrace" id="O33840"/>
<dbReference type="Proteomes" id="UP000008183">
    <property type="component" value="Chromosome"/>
</dbReference>
<dbReference type="GO" id="GO:0030246">
    <property type="term" value="F:carbohydrate binding"/>
    <property type="evidence" value="ECO:0007669"/>
    <property type="project" value="InterPro"/>
</dbReference>
<dbReference type="GO" id="GO:0051060">
    <property type="term" value="F:pullulanase activity"/>
    <property type="evidence" value="ECO:0007669"/>
    <property type="project" value="UniProtKB-EC"/>
</dbReference>
<dbReference type="GO" id="GO:0005975">
    <property type="term" value="P:carbohydrate metabolic process"/>
    <property type="evidence" value="ECO:0007669"/>
    <property type="project" value="InterPro"/>
</dbReference>
<dbReference type="CDD" id="cd11341">
    <property type="entry name" value="AmyAc_Pullulanase_LD-like"/>
    <property type="match status" value="1"/>
</dbReference>
<dbReference type="CDD" id="cd10315">
    <property type="entry name" value="CBM41_pullulanase"/>
    <property type="match status" value="1"/>
</dbReference>
<dbReference type="CDD" id="cd02860">
    <property type="entry name" value="E_set_Pullulanase"/>
    <property type="match status" value="1"/>
</dbReference>
<dbReference type="Gene3D" id="2.60.40.1110">
    <property type="match status" value="1"/>
</dbReference>
<dbReference type="Gene3D" id="3.20.20.80">
    <property type="entry name" value="Glycosidases"/>
    <property type="match status" value="1"/>
</dbReference>
<dbReference type="Gene3D" id="2.60.40.1180">
    <property type="entry name" value="Golgi alpha-mannosidase II"/>
    <property type="match status" value="1"/>
</dbReference>
<dbReference type="Gene3D" id="2.60.40.10">
    <property type="entry name" value="Immunoglobulins"/>
    <property type="match status" value="1"/>
</dbReference>
<dbReference type="InterPro" id="IPR013784">
    <property type="entry name" value="Carb-bd-like_fold"/>
</dbReference>
<dbReference type="InterPro" id="IPR005323">
    <property type="entry name" value="CBM41_pullulanase"/>
</dbReference>
<dbReference type="InterPro" id="IPR006047">
    <property type="entry name" value="Glyco_hydro_13_cat_dom"/>
</dbReference>
<dbReference type="InterPro" id="IPR004193">
    <property type="entry name" value="Glyco_hydro_13_N"/>
</dbReference>
<dbReference type="InterPro" id="IPR013780">
    <property type="entry name" value="Glyco_hydro_b"/>
</dbReference>
<dbReference type="InterPro" id="IPR017853">
    <property type="entry name" value="Glycoside_hydrolase_SF"/>
</dbReference>
<dbReference type="InterPro" id="IPR013783">
    <property type="entry name" value="Ig-like_fold"/>
</dbReference>
<dbReference type="InterPro" id="IPR014756">
    <property type="entry name" value="Ig_E-set"/>
</dbReference>
<dbReference type="InterPro" id="IPR049117">
    <property type="entry name" value="pulA_all-beta"/>
</dbReference>
<dbReference type="InterPro" id="IPR011840">
    <property type="entry name" value="PulA_typeI"/>
</dbReference>
<dbReference type="NCBIfam" id="TIGR02104">
    <property type="entry name" value="pulA_typeI"/>
    <property type="match status" value="1"/>
</dbReference>
<dbReference type="PANTHER" id="PTHR43002">
    <property type="entry name" value="GLYCOGEN DEBRANCHING ENZYME"/>
    <property type="match status" value="1"/>
</dbReference>
<dbReference type="Pfam" id="PF02922">
    <property type="entry name" value="CBM_48"/>
    <property type="match status" value="1"/>
</dbReference>
<dbReference type="Pfam" id="PF03714">
    <property type="entry name" value="PUD"/>
    <property type="match status" value="1"/>
</dbReference>
<dbReference type="Pfam" id="PF21653">
    <property type="entry name" value="pulA_all-beta"/>
    <property type="match status" value="1"/>
</dbReference>
<dbReference type="SMART" id="SM00642">
    <property type="entry name" value="Aamy"/>
    <property type="match status" value="1"/>
</dbReference>
<dbReference type="SUPFAM" id="SSF51445">
    <property type="entry name" value="(Trans)glycosidases"/>
    <property type="match status" value="1"/>
</dbReference>
<dbReference type="SUPFAM" id="SSF81296">
    <property type="entry name" value="E set domains"/>
    <property type="match status" value="1"/>
</dbReference>
<dbReference type="SUPFAM" id="SSF49452">
    <property type="entry name" value="Starch-binding domain-like"/>
    <property type="match status" value="1"/>
</dbReference>
<evidence type="ECO:0000250" key="1"/>
<evidence type="ECO:0000255" key="2"/>
<evidence type="ECO:0000305" key="3"/>
<evidence type="ECO:0007829" key="4">
    <source>
        <dbReference type="PDB" id="2J73"/>
    </source>
</evidence>
<protein>
    <recommendedName>
        <fullName>Pullulanase</fullName>
        <ecNumber>3.2.1.41</ecNumber>
    </recommendedName>
    <alternativeName>
        <fullName>Alpha-dextrin endo-1,6-alpha-glucosidase</fullName>
    </alternativeName>
    <alternativeName>
        <fullName>Pullulan 6-glucanohydrolase</fullName>
    </alternativeName>
</protein>
<organism>
    <name type="scientific">Thermotoga maritima (strain ATCC 43589 / DSM 3109 / JCM 10099 / NBRC 100826 / MSB8)</name>
    <dbReference type="NCBI Taxonomy" id="243274"/>
    <lineage>
        <taxon>Bacteria</taxon>
        <taxon>Thermotogati</taxon>
        <taxon>Thermotogota</taxon>
        <taxon>Thermotogae</taxon>
        <taxon>Thermotogales</taxon>
        <taxon>Thermotogaceae</taxon>
        <taxon>Thermotoga</taxon>
    </lineage>
</organism>
<keyword id="KW-0002">3D-structure</keyword>
<keyword id="KW-0326">Glycosidase</keyword>
<keyword id="KW-0378">Hydrolase</keyword>
<keyword id="KW-1185">Reference proteome</keyword>
<keyword id="KW-0732">Signal</keyword>
<accession>O33840</accession>
<gene>
    <name type="primary">pulA</name>
    <name type="ordered locus">TM_1845</name>
</gene>
<feature type="signal peptide" evidence="2">
    <location>
        <begin position="1"/>
        <end position="19"/>
    </location>
</feature>
<feature type="chain" id="PRO_0000001428" description="Pullulanase">
    <location>
        <begin position="20"/>
        <end position="843"/>
    </location>
</feature>
<feature type="active site" description="Nucleophile" evidence="1">
    <location>
        <position position="535"/>
    </location>
</feature>
<feature type="active site" description="Proton donor" evidence="1">
    <location>
        <position position="564"/>
    </location>
</feature>
<feature type="site" description="Transition state stabilizer" evidence="1">
    <location>
        <position position="652"/>
    </location>
</feature>
<feature type="strand" evidence="4">
    <location>
        <begin position="21"/>
        <end position="28"/>
    </location>
</feature>
<feature type="strand" evidence="4">
    <location>
        <begin position="37"/>
        <end position="47"/>
    </location>
</feature>
<feature type="strand" evidence="4">
    <location>
        <begin position="52"/>
        <end position="54"/>
    </location>
</feature>
<feature type="strand" evidence="4">
    <location>
        <begin position="58"/>
        <end position="60"/>
    </location>
</feature>
<feature type="strand" evidence="4">
    <location>
        <begin position="63"/>
        <end position="72"/>
    </location>
</feature>
<feature type="strand" evidence="4">
    <location>
        <begin position="75"/>
        <end position="83"/>
    </location>
</feature>
<feature type="turn" evidence="4">
    <location>
        <begin position="84"/>
        <end position="87"/>
    </location>
</feature>
<feature type="strand" evidence="4">
    <location>
        <begin position="88"/>
        <end position="98"/>
    </location>
</feature>
<feature type="strand" evidence="4">
    <location>
        <begin position="103"/>
        <end position="109"/>
    </location>
</feature>
<feature type="strand" evidence="4">
    <location>
        <begin position="116"/>
        <end position="118"/>
    </location>
</feature>
<sequence length="843" mass="96262">MKTKLWLLLVLLLSALIFSETTIVVHYHRYDGKYDGWNLWIWPVEPVSQEGKAYQFTGEDDFGKVAVVKLPMDLTKVGIIVRLNEWQAKDVAKDRFIEIKDGKAEVWILQGVEEIFYEKPDTSPRIFFAQARSNKVIEAFLTNPVDTKKKELFKVTVDGKEIPVSRVEKADPTDIDVTNYVRIVLSESLKEEDLRKDVELIIEGYKPARVIMMEILDDYYYDGELGAVYSPEKTIFRVWSPVSKWVKVLLFKNGEDTEPYQVVNMEYKGNGVWEAVVEGDLDGVFYLYQLENYGKIRTTVDPYSKAVYANSKKSAVVNLARTNPEGWENDRGPKIEGYEDAIIYEIHIADITGLENSGVKNKGLYLGLTEENTKGPGGVTTGLSHLVELGVTHVHILPFFDFYTGDELDKDFEKYYNWGYDPYLFMVPEGRYSTDPKNPHTRIREVKEMVKALHKHGIGVIMDMVFPHTYGIGELSAFDQTVPYYFYRIDKTGAYLNESGCGNVIASERPMMRKFIVDTVTYWVKEYHIDGFRFDQMGLIDKKTMLEVERALHKIDPTIILYGEPWGGWGAPIRFGKSDVAGTHVAAFNDEFRDAIRGSVFNPSVKGFVMGGYGKETKIKRGVVGSINYDGKLIKSFALDPEETINYAACHDNHTLWDKNYLAAKADKKKEWTEEELKNAQKLAGAILLTSQGVPFLHGGQDFCRTKNFNDNSYNAPISINGFDYERKLQFIDVFNYHKGLIKLRKEHPAFRLKNAEEIKKHLEFLPGGRRIVAFMLKDHAGGDPWKDIVVIYNGNLEKTTYKLPEGKWNVVVNSQKAGTEVIETVEGTIELDPLSAYVLYRE</sequence>